<protein>
    <recommendedName>
        <fullName evidence="1">NAD-dependent protein deacylase</fullName>
        <ecNumber evidence="1">2.3.1.286</ecNumber>
    </recommendedName>
    <alternativeName>
        <fullName evidence="1">Regulatory protein SIR2 homolog</fullName>
    </alternativeName>
</protein>
<dbReference type="EC" id="2.3.1.286" evidence="1"/>
<dbReference type="EMBL" id="AE004439">
    <property type="protein sequence ID" value="AAK03077.1"/>
    <property type="molecule type" value="Genomic_DNA"/>
</dbReference>
<dbReference type="RefSeq" id="WP_010906956.1">
    <property type="nucleotide sequence ID" value="NC_002663.1"/>
</dbReference>
<dbReference type="SMR" id="Q9CM50"/>
<dbReference type="STRING" id="272843.PM0993"/>
<dbReference type="EnsemblBacteria" id="AAK03077">
    <property type="protein sequence ID" value="AAK03077"/>
    <property type="gene ID" value="PM0993"/>
</dbReference>
<dbReference type="KEGG" id="pmu:PM0993"/>
<dbReference type="PATRIC" id="fig|272843.6.peg.1006"/>
<dbReference type="HOGENOM" id="CLU_023643_3_1_6"/>
<dbReference type="OrthoDB" id="9800582at2"/>
<dbReference type="Proteomes" id="UP000000809">
    <property type="component" value="Chromosome"/>
</dbReference>
<dbReference type="GO" id="GO:0005737">
    <property type="term" value="C:cytoplasm"/>
    <property type="evidence" value="ECO:0007669"/>
    <property type="project" value="UniProtKB-SubCell"/>
</dbReference>
<dbReference type="GO" id="GO:0017136">
    <property type="term" value="F:histone deacetylase activity, NAD-dependent"/>
    <property type="evidence" value="ECO:0007669"/>
    <property type="project" value="TreeGrafter"/>
</dbReference>
<dbReference type="GO" id="GO:0070403">
    <property type="term" value="F:NAD+ binding"/>
    <property type="evidence" value="ECO:0007669"/>
    <property type="project" value="UniProtKB-UniRule"/>
</dbReference>
<dbReference type="GO" id="GO:0036054">
    <property type="term" value="F:protein-malonyllysine demalonylase activity"/>
    <property type="evidence" value="ECO:0007669"/>
    <property type="project" value="InterPro"/>
</dbReference>
<dbReference type="GO" id="GO:0036055">
    <property type="term" value="F:protein-succinyllysine desuccinylase activity"/>
    <property type="evidence" value="ECO:0007669"/>
    <property type="project" value="UniProtKB-UniRule"/>
</dbReference>
<dbReference type="GO" id="GO:0008270">
    <property type="term" value="F:zinc ion binding"/>
    <property type="evidence" value="ECO:0007669"/>
    <property type="project" value="UniProtKB-UniRule"/>
</dbReference>
<dbReference type="CDD" id="cd01412">
    <property type="entry name" value="SIRT5_Af1_CobB"/>
    <property type="match status" value="1"/>
</dbReference>
<dbReference type="Gene3D" id="3.30.1600.10">
    <property type="entry name" value="SIR2/SIRT2 'Small Domain"/>
    <property type="match status" value="1"/>
</dbReference>
<dbReference type="Gene3D" id="3.40.50.1220">
    <property type="entry name" value="TPP-binding domain"/>
    <property type="match status" value="1"/>
</dbReference>
<dbReference type="HAMAP" id="MF_01121">
    <property type="entry name" value="Sirtuin_ClassIII"/>
    <property type="match status" value="1"/>
</dbReference>
<dbReference type="InterPro" id="IPR029035">
    <property type="entry name" value="DHS-like_NAD/FAD-binding_dom"/>
</dbReference>
<dbReference type="InterPro" id="IPR050134">
    <property type="entry name" value="NAD-dep_sirtuin_deacylases"/>
</dbReference>
<dbReference type="InterPro" id="IPR003000">
    <property type="entry name" value="Sirtuin"/>
</dbReference>
<dbReference type="InterPro" id="IPR026591">
    <property type="entry name" value="Sirtuin_cat_small_dom_sf"/>
</dbReference>
<dbReference type="InterPro" id="IPR027546">
    <property type="entry name" value="Sirtuin_class_III"/>
</dbReference>
<dbReference type="InterPro" id="IPR026590">
    <property type="entry name" value="Ssirtuin_cat_dom"/>
</dbReference>
<dbReference type="NCBIfam" id="NF001755">
    <property type="entry name" value="PRK00481.1-5"/>
    <property type="match status" value="1"/>
</dbReference>
<dbReference type="PANTHER" id="PTHR11085:SF4">
    <property type="entry name" value="NAD-DEPENDENT PROTEIN DEACYLASE"/>
    <property type="match status" value="1"/>
</dbReference>
<dbReference type="PANTHER" id="PTHR11085">
    <property type="entry name" value="NAD-DEPENDENT PROTEIN DEACYLASE SIRTUIN-5, MITOCHONDRIAL-RELATED"/>
    <property type="match status" value="1"/>
</dbReference>
<dbReference type="Pfam" id="PF02146">
    <property type="entry name" value="SIR2"/>
    <property type="match status" value="1"/>
</dbReference>
<dbReference type="SUPFAM" id="SSF52467">
    <property type="entry name" value="DHS-like NAD/FAD-binding domain"/>
    <property type="match status" value="1"/>
</dbReference>
<dbReference type="PROSITE" id="PS50305">
    <property type="entry name" value="SIRTUIN"/>
    <property type="match status" value="1"/>
</dbReference>
<feature type="chain" id="PRO_0000110334" description="NAD-dependent protein deacylase">
    <location>
        <begin position="1"/>
        <end position="234"/>
    </location>
</feature>
<feature type="domain" description="Deacetylase sirtuin-type" evidence="2">
    <location>
        <begin position="1"/>
        <end position="234"/>
    </location>
</feature>
<feature type="active site" description="Proton acceptor" evidence="1">
    <location>
        <position position="111"/>
    </location>
</feature>
<feature type="binding site" evidence="1">
    <location>
        <begin position="12"/>
        <end position="31"/>
    </location>
    <ligand>
        <name>NAD(+)</name>
        <dbReference type="ChEBI" id="CHEBI:57540"/>
    </ligand>
</feature>
<feature type="binding site" evidence="1">
    <location>
        <position position="56"/>
    </location>
    <ligand>
        <name>substrate</name>
    </ligand>
</feature>
<feature type="binding site" evidence="1">
    <location>
        <position position="59"/>
    </location>
    <ligand>
        <name>substrate</name>
    </ligand>
</feature>
<feature type="binding site" evidence="1">
    <location>
        <begin position="93"/>
        <end position="96"/>
    </location>
    <ligand>
        <name>NAD(+)</name>
        <dbReference type="ChEBI" id="CHEBI:57540"/>
    </ligand>
</feature>
<feature type="binding site" evidence="1">
    <location>
        <position position="119"/>
    </location>
    <ligand>
        <name>Zn(2+)</name>
        <dbReference type="ChEBI" id="CHEBI:29105"/>
    </ligand>
</feature>
<feature type="binding site" evidence="1">
    <location>
        <position position="138"/>
    </location>
    <ligand>
        <name>Zn(2+)</name>
        <dbReference type="ChEBI" id="CHEBI:29105"/>
    </ligand>
</feature>
<feature type="binding site" evidence="1">
    <location>
        <begin position="178"/>
        <end position="180"/>
    </location>
    <ligand>
        <name>NAD(+)</name>
        <dbReference type="ChEBI" id="CHEBI:57540"/>
    </ligand>
</feature>
<feature type="binding site" evidence="1">
    <location>
        <begin position="204"/>
        <end position="206"/>
    </location>
    <ligand>
        <name>NAD(+)</name>
        <dbReference type="ChEBI" id="CHEBI:57540"/>
    </ligand>
</feature>
<feature type="binding site" evidence="1">
    <location>
        <position position="222"/>
    </location>
    <ligand>
        <name>NAD(+)</name>
        <dbReference type="ChEBI" id="CHEBI:57540"/>
    </ligand>
</feature>
<name>NPD_PASMU</name>
<gene>
    <name evidence="1" type="primary">cobB</name>
    <name type="ordered locus">PM0993</name>
</gene>
<comment type="function">
    <text evidence="1">NAD-dependent lysine deacetylase and desuccinylase that specifically removes acetyl and succinyl groups on target proteins. Modulates the activities of several proteins which are inactive in their acylated form.</text>
</comment>
<comment type="catalytic activity">
    <reaction evidence="1">
        <text>N(6)-acetyl-L-lysyl-[protein] + NAD(+) + H2O = 2''-O-acetyl-ADP-D-ribose + nicotinamide + L-lysyl-[protein]</text>
        <dbReference type="Rhea" id="RHEA:43636"/>
        <dbReference type="Rhea" id="RHEA-COMP:9752"/>
        <dbReference type="Rhea" id="RHEA-COMP:10731"/>
        <dbReference type="ChEBI" id="CHEBI:15377"/>
        <dbReference type="ChEBI" id="CHEBI:17154"/>
        <dbReference type="ChEBI" id="CHEBI:29969"/>
        <dbReference type="ChEBI" id="CHEBI:57540"/>
        <dbReference type="ChEBI" id="CHEBI:61930"/>
        <dbReference type="ChEBI" id="CHEBI:83767"/>
        <dbReference type="EC" id="2.3.1.286"/>
    </reaction>
</comment>
<comment type="catalytic activity">
    <reaction evidence="1">
        <text>N(6)-succinyl-L-lysyl-[protein] + NAD(+) + H2O = 2''-O-succinyl-ADP-D-ribose + nicotinamide + L-lysyl-[protein]</text>
        <dbReference type="Rhea" id="RHEA:47668"/>
        <dbReference type="Rhea" id="RHEA-COMP:9752"/>
        <dbReference type="Rhea" id="RHEA-COMP:11877"/>
        <dbReference type="ChEBI" id="CHEBI:15377"/>
        <dbReference type="ChEBI" id="CHEBI:17154"/>
        <dbReference type="ChEBI" id="CHEBI:29969"/>
        <dbReference type="ChEBI" id="CHEBI:57540"/>
        <dbReference type="ChEBI" id="CHEBI:87830"/>
        <dbReference type="ChEBI" id="CHEBI:87832"/>
    </reaction>
</comment>
<comment type="cofactor">
    <cofactor evidence="1">
        <name>Zn(2+)</name>
        <dbReference type="ChEBI" id="CHEBI:29105"/>
    </cofactor>
    <text evidence="1">Binds 1 zinc ion per subunit.</text>
</comment>
<comment type="subcellular location">
    <subcellularLocation>
        <location evidence="1">Cytoplasm</location>
    </subcellularLocation>
</comment>
<comment type="domain">
    <text evidence="1">2 residues (Tyr-56 and Arg-59) present in a large hydrophobic pocket are probably involved in substrate specificity. They are important for desuccinylation activity, but dispensable for deacetylation activity.</text>
</comment>
<comment type="similarity">
    <text evidence="1">Belongs to the sirtuin family. Class III subfamily.</text>
</comment>
<proteinExistence type="inferred from homology"/>
<accession>Q9CM50</accession>
<sequence length="234" mass="26343">MTKQVRIVVLTGAGISAESGIRTFRATDGLWENHPVDEVATPEGFARNPKLVQRFYNERRKQLFSDQIAPNAAHFALAELEKKLGDNLLIVTQNVDNLHERAGSKNLIHMHGELLKVRCVKSGKIYDWQGDIGEHDKCLCCTPTQILRPHIVWFGEMPLEMEKIQTALSECDYFISIGTSGNVYPAAGFVREALFYGAHTVELNLEPSQVRSSFDECHYGKATELVPHYLAQFL</sequence>
<keyword id="KW-0963">Cytoplasm</keyword>
<keyword id="KW-0479">Metal-binding</keyword>
<keyword id="KW-0520">NAD</keyword>
<keyword id="KW-1185">Reference proteome</keyword>
<keyword id="KW-0808">Transferase</keyword>
<keyword id="KW-0862">Zinc</keyword>
<reference key="1">
    <citation type="journal article" date="2001" name="Proc. Natl. Acad. Sci. U.S.A.">
        <title>Complete genomic sequence of Pasteurella multocida Pm70.</title>
        <authorList>
            <person name="May B.J."/>
            <person name="Zhang Q."/>
            <person name="Li L.L."/>
            <person name="Paustian M.L."/>
            <person name="Whittam T.S."/>
            <person name="Kapur V."/>
        </authorList>
    </citation>
    <scope>NUCLEOTIDE SEQUENCE [LARGE SCALE GENOMIC DNA]</scope>
    <source>
        <strain>Pm70</strain>
    </source>
</reference>
<evidence type="ECO:0000255" key="1">
    <source>
        <dbReference type="HAMAP-Rule" id="MF_01121"/>
    </source>
</evidence>
<evidence type="ECO:0000255" key="2">
    <source>
        <dbReference type="PROSITE-ProRule" id="PRU00236"/>
    </source>
</evidence>
<organism>
    <name type="scientific">Pasteurella multocida (strain Pm70)</name>
    <dbReference type="NCBI Taxonomy" id="272843"/>
    <lineage>
        <taxon>Bacteria</taxon>
        <taxon>Pseudomonadati</taxon>
        <taxon>Pseudomonadota</taxon>
        <taxon>Gammaproteobacteria</taxon>
        <taxon>Pasteurellales</taxon>
        <taxon>Pasteurellaceae</taxon>
        <taxon>Pasteurella</taxon>
    </lineage>
</organism>